<evidence type="ECO:0000250" key="1"/>
<evidence type="ECO:0000250" key="2">
    <source>
        <dbReference type="UniProtKB" id="Q7TT18"/>
    </source>
</evidence>
<evidence type="ECO:0000255" key="3"/>
<evidence type="ECO:0000255" key="4">
    <source>
        <dbReference type="PROSITE-ProRule" id="PRU00316"/>
    </source>
</evidence>
<evidence type="ECO:0000256" key="5">
    <source>
        <dbReference type="SAM" id="MobiDB-lite"/>
    </source>
</evidence>
<evidence type="ECO:0000269" key="6">
    <source>
    </source>
</evidence>
<evidence type="ECO:0000269" key="7">
    <source>
    </source>
</evidence>
<evidence type="ECO:0000269" key="8">
    <source>
    </source>
</evidence>
<evidence type="ECO:0000269" key="9">
    <source>
    </source>
</evidence>
<evidence type="ECO:0000269" key="10">
    <source>
    </source>
</evidence>
<evidence type="ECO:0000269" key="11">
    <source>
    </source>
</evidence>
<evidence type="ECO:0000269" key="12">
    <source>
    </source>
</evidence>
<evidence type="ECO:0000269" key="13">
    <source>
    </source>
</evidence>
<evidence type="ECO:0000269" key="14">
    <source>
    </source>
</evidence>
<evidence type="ECO:0000269" key="15">
    <source>
    </source>
</evidence>
<evidence type="ECO:0000269" key="16">
    <source>
    </source>
</evidence>
<evidence type="ECO:0000269" key="17">
    <source>
    </source>
</evidence>
<evidence type="ECO:0000303" key="18">
    <source>
    </source>
</evidence>
<evidence type="ECO:0000305" key="19"/>
<evidence type="ECO:0000312" key="20">
    <source>
        <dbReference type="HGNC" id="HGNC:20092"/>
    </source>
</evidence>
<evidence type="ECO:0007744" key="21">
    <source>
    </source>
</evidence>
<evidence type="ECO:0007744" key="22">
    <source>
    </source>
</evidence>
<evidence type="ECO:0007744" key="23">
    <source>
    </source>
</evidence>
<evidence type="ECO:0007744" key="24">
    <source>
    </source>
</evidence>
<evidence type="ECO:0007744" key="25">
    <source>
    </source>
</evidence>
<evidence type="ECO:0007744" key="26">
    <source>
    </source>
</evidence>
<evidence type="ECO:0007744" key="27">
    <source>
    </source>
</evidence>
<sequence length="1270" mass="136394">MDSLEEPQKKVFKARKTMRVSDRQQLEAVYKVKEELLKTDVKLLNGNHENGDLDPTSPLENMDYIKDKEEVNGIEEICFDPEGSKAEWKETPCILSVNVKNKQDDDLNCEPLSPHNITPEPVSKLPAEPVSGDPAPGDLDAGDPASGVLASGDSTSGDPTSSEPSSSDAASGDATSGDAPSGDVSPGDATSGDATADDLSSGDPTSSDPIPGEPVPVEPISGDCAADDIASSEITSVDLASGAPASTDPASDDLASGDLSSSELASDDLATGELASDELTSESTFDRTFEPKSVPVCEPVPEIDNIEPSSNKDDDFLEKNGADEKLEQIQSKDSLDEKNKADNNIDANEETLETDDTTICSDRPPENEKKVEEDIITELALGEDAISSSMEIDQGEKNEDETSADLVETINENVIEDNKSENILENTDSMETDEIIPILEKLAPSEDELTCFSKTSLLPIDETNPDLEEKMESSFGSPSKQESSESLPKEAFLVLSDEEDISGEKDESEVISQNETCSPAEVESNEKDNKPEEEEQVIHEDDERPSEKNEFSRRKRSKSEDMDNVQSKRRRYMEEEYEAEFQVKITAKGDINQKLQKVIQWLLEEKLCALQCAVFDKTLAELKTRVEKIECNKRHKTVLTELQAKIARLTKRFEAAKEDLKKRHEHPPNPPVSPGKTVNDVNSNNNMSYRNAGTVRQMLESKRNVSESAPPSFQTPVNTVSSTNLVTPPAVVSSQPKLQTPVTSGSLTATSVLPAPNTATVVATTQVPSGNPQPTISLQPLPVILHVPVAVSSQPQLLQSHPGTLVTNQPSGNVEFISVQSPPTVSGLTKNPVSLPSLPNPTKPNNVPSVPSPSIQRNPTASAAPLGTTLAVQAVPTAHSIVQATRTSLPTVGPSGLYSPSTNRGPIQMKIPISAFSTSSAAEQNSNTTPRIENQTNKTIDASVSKKAADSTSQCGKATGSDSSGVIDLTMDDEESGASQDPKKLNHTPVSTMSSSQPVSRPLQPIQPAPPLQPSGVPTSGPSQTTIHLLPTAPTTVNVTHRPVTQVTTRLPVPRAPANHQVVYTTLPAPPAQAPLRGTVMQAPAVRQVNPQNSVTVRVPQTTTYVVNNGLTLGSTGPQLTVHHRPPQVHTEPPRPVHPAPLPEAPQPQRLPPEAASTSLPQKPHLKLARVQSQNGIVLSWSVLEVDRSCATVDSYHLYAYHEEPSATVPSQWKKIGEVKALPLPMACTLTQFVSGSKYYFAVRAKDIYGRFGPFCDPQSTDVISSTQSS</sequence>
<protein>
    <recommendedName>
        <fullName evidence="19">Activating transcription factor 7-interacting protein 1</fullName>
    </recommendedName>
    <alternativeName>
        <fullName>ATF-interacting protein</fullName>
        <shortName>ATF-IP</shortName>
    </alternativeName>
    <alternativeName>
        <fullName>ATF7-interacting protein</fullName>
    </alternativeName>
    <alternativeName>
        <fullName>ATFa-associated modulator</fullName>
        <shortName>hAM</shortName>
    </alternativeName>
    <alternativeName>
        <fullName>MBD1-containing chromatin-associated factor 1</fullName>
    </alternativeName>
    <alternativeName>
        <fullName>P621</fullName>
    </alternativeName>
</protein>
<organism>
    <name type="scientific">Homo sapiens</name>
    <name type="common">Human</name>
    <dbReference type="NCBI Taxonomy" id="9606"/>
    <lineage>
        <taxon>Eukaryota</taxon>
        <taxon>Metazoa</taxon>
        <taxon>Chordata</taxon>
        <taxon>Craniata</taxon>
        <taxon>Vertebrata</taxon>
        <taxon>Euteleostomi</taxon>
        <taxon>Mammalia</taxon>
        <taxon>Eutheria</taxon>
        <taxon>Euarchontoglires</taxon>
        <taxon>Primates</taxon>
        <taxon>Haplorrhini</taxon>
        <taxon>Catarrhini</taxon>
        <taxon>Hominidae</taxon>
        <taxon>Homo</taxon>
    </lineage>
</organism>
<gene>
    <name evidence="20" type="primary">ATF7IP</name>
    <name type="synonym">MCAF</name>
    <name type="synonym">MCAF1</name>
</gene>
<dbReference type="EMBL" id="AY337596">
    <property type="protein sequence ID" value="AAQ92978.1"/>
    <property type="molecule type" value="mRNA"/>
</dbReference>
<dbReference type="EMBL" id="AF425650">
    <property type="protein sequence ID" value="AAO91864.1"/>
    <property type="molecule type" value="mRNA"/>
</dbReference>
<dbReference type="EMBL" id="AC007782">
    <property type="status" value="NOT_ANNOTATED_CDS"/>
    <property type="molecule type" value="Genomic_DNA"/>
</dbReference>
<dbReference type="EMBL" id="AC008114">
    <property type="status" value="NOT_ANNOTATED_CDS"/>
    <property type="molecule type" value="Genomic_DNA"/>
</dbReference>
<dbReference type="EMBL" id="AC008814">
    <property type="status" value="NOT_ANNOTATED_CDS"/>
    <property type="molecule type" value="Genomic_DNA"/>
</dbReference>
<dbReference type="EMBL" id="AC124892">
    <property type="status" value="NOT_ANNOTATED_CDS"/>
    <property type="molecule type" value="Genomic_DNA"/>
</dbReference>
<dbReference type="EMBL" id="CH471094">
    <property type="protein sequence ID" value="EAW96320.1"/>
    <property type="molecule type" value="Genomic_DNA"/>
</dbReference>
<dbReference type="EMBL" id="BC037312">
    <property type="protein sequence ID" value="AAH37312.1"/>
    <property type="status" value="ALT_SEQ"/>
    <property type="molecule type" value="mRNA"/>
</dbReference>
<dbReference type="EMBL" id="BC063855">
    <property type="protein sequence ID" value="AAH63855.1"/>
    <property type="molecule type" value="mRNA"/>
</dbReference>
<dbReference type="EMBL" id="AK001001">
    <property type="status" value="NOT_ANNOTATED_CDS"/>
    <property type="molecule type" value="mRNA"/>
</dbReference>
<dbReference type="EMBL" id="AK001550">
    <property type="protein sequence ID" value="BAA91751.1"/>
    <property type="status" value="ALT_INIT"/>
    <property type="molecule type" value="mRNA"/>
</dbReference>
<dbReference type="EMBL" id="AJ242978">
    <property type="protein sequence ID" value="CAB45135.1"/>
    <property type="molecule type" value="mRNA"/>
</dbReference>
<dbReference type="CCDS" id="CCDS66326.1">
    <molecule id="Q6VMQ6-4"/>
</dbReference>
<dbReference type="CCDS" id="CCDS66327.1">
    <molecule id="Q6VMQ6-5"/>
</dbReference>
<dbReference type="CCDS" id="CCDS73449.1">
    <molecule id="Q6VMQ6-2"/>
</dbReference>
<dbReference type="CCDS" id="CCDS8663.1">
    <molecule id="Q6VMQ6-1"/>
</dbReference>
<dbReference type="RefSeq" id="NP_001273443.1">
    <molecule id="Q6VMQ6-5"/>
    <property type="nucleotide sequence ID" value="NM_001286514.2"/>
</dbReference>
<dbReference type="RefSeq" id="NP_001273444.1">
    <molecule id="Q6VMQ6-2"/>
    <property type="nucleotide sequence ID" value="NM_001286515.2"/>
</dbReference>
<dbReference type="RefSeq" id="NP_001375109.1">
    <molecule id="Q6VMQ6-1"/>
    <property type="nucleotide sequence ID" value="NM_001388180.1"/>
</dbReference>
<dbReference type="RefSeq" id="NP_001375110.1">
    <molecule id="Q6VMQ6-1"/>
    <property type="nucleotide sequence ID" value="NM_001388181.1"/>
</dbReference>
<dbReference type="RefSeq" id="NP_001375111.1">
    <molecule id="Q6VMQ6-1"/>
    <property type="nucleotide sequence ID" value="NM_001388182.1"/>
</dbReference>
<dbReference type="RefSeq" id="NP_001375112.1">
    <molecule id="Q6VMQ6-1"/>
    <property type="nucleotide sequence ID" value="NM_001388183.1"/>
</dbReference>
<dbReference type="RefSeq" id="NP_001375113.1">
    <molecule id="Q6VMQ6-5"/>
    <property type="nucleotide sequence ID" value="NM_001388184.1"/>
</dbReference>
<dbReference type="RefSeq" id="NP_060649.3">
    <molecule id="Q6VMQ6-1"/>
    <property type="nucleotide sequence ID" value="NM_018179.4"/>
</dbReference>
<dbReference type="RefSeq" id="NP_851997.1">
    <molecule id="Q6VMQ6-4"/>
    <property type="nucleotide sequence ID" value="NM_181352.2"/>
</dbReference>
<dbReference type="RefSeq" id="XP_006719171.1">
    <property type="nucleotide sequence ID" value="XM_006719108.3"/>
</dbReference>
<dbReference type="RefSeq" id="XP_006719172.1">
    <property type="nucleotide sequence ID" value="XM_006719109.3"/>
</dbReference>
<dbReference type="RefSeq" id="XP_011519056.1">
    <property type="nucleotide sequence ID" value="XM_011520754.2"/>
</dbReference>
<dbReference type="RefSeq" id="XP_011519057.1">
    <property type="nucleotide sequence ID" value="XM_011520755.2"/>
</dbReference>
<dbReference type="RefSeq" id="XP_016875127.1">
    <property type="nucleotide sequence ID" value="XM_017019638.1"/>
</dbReference>
<dbReference type="RefSeq" id="XP_016875128.1">
    <property type="nucleotide sequence ID" value="XM_017019639.1"/>
</dbReference>
<dbReference type="RefSeq" id="XP_047285104.1">
    <molecule id="Q6VMQ6-1"/>
    <property type="nucleotide sequence ID" value="XM_047429148.1"/>
</dbReference>
<dbReference type="PDB" id="2RPQ">
    <property type="method" value="NMR"/>
    <property type="chains" value="B=938-981"/>
</dbReference>
<dbReference type="PDBsum" id="2RPQ"/>
<dbReference type="SMR" id="Q6VMQ6"/>
<dbReference type="BioGRID" id="120849">
    <property type="interactions" value="85"/>
</dbReference>
<dbReference type="CORUM" id="Q6VMQ6"/>
<dbReference type="FunCoup" id="Q6VMQ6">
    <property type="interactions" value="3714"/>
</dbReference>
<dbReference type="IntAct" id="Q6VMQ6">
    <property type="interactions" value="95"/>
</dbReference>
<dbReference type="MINT" id="Q6VMQ6"/>
<dbReference type="STRING" id="9606.ENSP00000440440"/>
<dbReference type="GlyCosmos" id="Q6VMQ6">
    <property type="glycosylation" value="18 sites, 2 glycans"/>
</dbReference>
<dbReference type="GlyGen" id="Q6VMQ6">
    <property type="glycosylation" value="36 sites, 2 O-linked glycans (36 sites)"/>
</dbReference>
<dbReference type="iPTMnet" id="Q6VMQ6"/>
<dbReference type="PhosphoSitePlus" id="Q6VMQ6"/>
<dbReference type="BioMuta" id="ATF7IP"/>
<dbReference type="DMDM" id="317373420"/>
<dbReference type="jPOST" id="Q6VMQ6"/>
<dbReference type="MassIVE" id="Q6VMQ6"/>
<dbReference type="PaxDb" id="9606-ENSP00000440440"/>
<dbReference type="PeptideAtlas" id="Q6VMQ6"/>
<dbReference type="ProteomicsDB" id="24334"/>
<dbReference type="ProteomicsDB" id="32440"/>
<dbReference type="ProteomicsDB" id="67728">
    <molecule id="Q6VMQ6-1"/>
</dbReference>
<dbReference type="ProteomicsDB" id="67729">
    <molecule id="Q6VMQ6-2"/>
</dbReference>
<dbReference type="Pumba" id="Q6VMQ6"/>
<dbReference type="Antibodypedia" id="12020">
    <property type="antibodies" value="91 antibodies from 20 providers"/>
</dbReference>
<dbReference type="DNASU" id="55729"/>
<dbReference type="Ensembl" id="ENST00000261168.9">
    <molecule id="Q6VMQ6-1"/>
    <property type="protein sequence ID" value="ENSP00000261168.4"/>
    <property type="gene ID" value="ENSG00000171681.13"/>
</dbReference>
<dbReference type="Ensembl" id="ENST00000536444.5">
    <molecule id="Q6VMQ6-5"/>
    <property type="protein sequence ID" value="ENSP00000445955.1"/>
    <property type="gene ID" value="ENSG00000171681.13"/>
</dbReference>
<dbReference type="Ensembl" id="ENST00000540793.5">
    <molecule id="Q6VMQ6-1"/>
    <property type="protein sequence ID" value="ENSP00000444589.1"/>
    <property type="gene ID" value="ENSG00000171681.13"/>
</dbReference>
<dbReference type="Ensembl" id="ENST00000543189.5">
    <molecule id="Q6VMQ6-2"/>
    <property type="protein sequence ID" value="ENSP00000443179.1"/>
    <property type="gene ID" value="ENSG00000171681.13"/>
</dbReference>
<dbReference type="Ensembl" id="ENST00000544627.5">
    <molecule id="Q6VMQ6-4"/>
    <property type="protein sequence ID" value="ENSP00000440440.1"/>
    <property type="gene ID" value="ENSG00000171681.13"/>
</dbReference>
<dbReference type="GeneID" id="55729"/>
<dbReference type="KEGG" id="hsa:55729"/>
<dbReference type="MANE-Select" id="ENST00000261168.9">
    <property type="protein sequence ID" value="ENSP00000261168.4"/>
    <property type="RefSeq nucleotide sequence ID" value="NM_018179.5"/>
    <property type="RefSeq protein sequence ID" value="NP_060649.3"/>
</dbReference>
<dbReference type="UCSC" id="uc001rbv.3">
    <molecule id="Q6VMQ6-1"/>
    <property type="organism name" value="human"/>
</dbReference>
<dbReference type="AGR" id="HGNC:20092"/>
<dbReference type="CTD" id="55729"/>
<dbReference type="DisGeNET" id="55729"/>
<dbReference type="GeneCards" id="ATF7IP"/>
<dbReference type="HGNC" id="HGNC:20092">
    <property type="gene designation" value="ATF7IP"/>
</dbReference>
<dbReference type="HPA" id="ENSG00000171681">
    <property type="expression patterns" value="Low tissue specificity"/>
</dbReference>
<dbReference type="MIM" id="613644">
    <property type="type" value="gene"/>
</dbReference>
<dbReference type="neXtProt" id="NX_Q6VMQ6"/>
<dbReference type="OpenTargets" id="ENSG00000171681"/>
<dbReference type="VEuPathDB" id="HostDB:ENSG00000171681"/>
<dbReference type="eggNOG" id="ENOG502QSM2">
    <property type="taxonomic scope" value="Eukaryota"/>
</dbReference>
<dbReference type="GeneTree" id="ENSGT00530000063707"/>
<dbReference type="HOGENOM" id="CLU_009529_0_0_1"/>
<dbReference type="InParanoid" id="Q6VMQ6"/>
<dbReference type="OMA" id="YQETIHE"/>
<dbReference type="OrthoDB" id="2434995at2759"/>
<dbReference type="PAN-GO" id="Q6VMQ6">
    <property type="GO annotations" value="5 GO annotations based on evolutionary models"/>
</dbReference>
<dbReference type="PhylomeDB" id="Q6VMQ6"/>
<dbReference type="TreeFam" id="TF329427"/>
<dbReference type="PathwayCommons" id="Q6VMQ6"/>
<dbReference type="Reactome" id="R-HSA-3214841">
    <property type="pathway name" value="PKMTs methylate histone lysines"/>
</dbReference>
<dbReference type="Reactome" id="R-HSA-9843940">
    <property type="pathway name" value="Regulation of endogenous retroelements by KRAB-ZFP proteins"/>
</dbReference>
<dbReference type="Reactome" id="R-HSA-9843970">
    <property type="pathway name" value="Regulation of endogenous retroelements by the Human Silencing Hub (HUSH) complex"/>
</dbReference>
<dbReference type="SignaLink" id="Q6VMQ6"/>
<dbReference type="BioGRID-ORCS" id="55729">
    <property type="hits" value="36 hits in 1175 CRISPR screens"/>
</dbReference>
<dbReference type="CD-CODE" id="B5B9A610">
    <property type="entry name" value="PML body"/>
</dbReference>
<dbReference type="ChiTaRS" id="ATF7IP">
    <property type="organism name" value="human"/>
</dbReference>
<dbReference type="EvolutionaryTrace" id="Q6VMQ6"/>
<dbReference type="GeneWiki" id="ATF7IP"/>
<dbReference type="GenomeRNAi" id="55729"/>
<dbReference type="Pharos" id="Q6VMQ6">
    <property type="development level" value="Tbio"/>
</dbReference>
<dbReference type="PRO" id="PR:Q6VMQ6"/>
<dbReference type="Proteomes" id="UP000005640">
    <property type="component" value="Chromosome 12"/>
</dbReference>
<dbReference type="RNAct" id="Q6VMQ6">
    <property type="molecule type" value="protein"/>
</dbReference>
<dbReference type="Bgee" id="ENSG00000171681">
    <property type="expression patterns" value="Expressed in buccal mucosa cell and 208 other cell types or tissues"/>
</dbReference>
<dbReference type="ExpressionAtlas" id="Q6VMQ6">
    <property type="expression patterns" value="baseline and differential"/>
</dbReference>
<dbReference type="GO" id="GO:0005829">
    <property type="term" value="C:cytosol"/>
    <property type="evidence" value="ECO:0000314"/>
    <property type="project" value="HPA"/>
</dbReference>
<dbReference type="GO" id="GO:0016604">
    <property type="term" value="C:nuclear body"/>
    <property type="evidence" value="ECO:0000314"/>
    <property type="project" value="HPA"/>
</dbReference>
<dbReference type="GO" id="GO:0005654">
    <property type="term" value="C:nucleoplasm"/>
    <property type="evidence" value="ECO:0000314"/>
    <property type="project" value="HPA"/>
</dbReference>
<dbReference type="GO" id="GO:0005634">
    <property type="term" value="C:nucleus"/>
    <property type="evidence" value="ECO:0000314"/>
    <property type="project" value="UniProtKB"/>
</dbReference>
<dbReference type="GO" id="GO:0005667">
    <property type="term" value="C:transcription regulator complex"/>
    <property type="evidence" value="ECO:0000318"/>
    <property type="project" value="GO_Central"/>
</dbReference>
<dbReference type="GO" id="GO:0016887">
    <property type="term" value="F:ATP hydrolysis activity"/>
    <property type="evidence" value="ECO:0007669"/>
    <property type="project" value="Ensembl"/>
</dbReference>
<dbReference type="GO" id="GO:0003712">
    <property type="term" value="F:transcription coregulator activity"/>
    <property type="evidence" value="ECO:0000314"/>
    <property type="project" value="GO_Central"/>
</dbReference>
<dbReference type="GO" id="GO:0003714">
    <property type="term" value="F:transcription corepressor activity"/>
    <property type="evidence" value="ECO:0007669"/>
    <property type="project" value="Ensembl"/>
</dbReference>
<dbReference type="GO" id="GO:0006346">
    <property type="term" value="P:DNA methylation-dependent constitutive heterochromatin formation"/>
    <property type="evidence" value="ECO:0000315"/>
    <property type="project" value="UniProtKB"/>
</dbReference>
<dbReference type="GO" id="GO:0045892">
    <property type="term" value="P:negative regulation of DNA-templated transcription"/>
    <property type="evidence" value="ECO:0000314"/>
    <property type="project" value="UniProtKB"/>
</dbReference>
<dbReference type="GO" id="GO:0000122">
    <property type="term" value="P:negative regulation of transcription by RNA polymerase II"/>
    <property type="evidence" value="ECO:0007669"/>
    <property type="project" value="Ensembl"/>
</dbReference>
<dbReference type="GO" id="GO:0045893">
    <property type="term" value="P:positive regulation of DNA-templated transcription"/>
    <property type="evidence" value="ECO:0000314"/>
    <property type="project" value="UniProtKB"/>
</dbReference>
<dbReference type="GO" id="GO:0006355">
    <property type="term" value="P:regulation of DNA-templated transcription"/>
    <property type="evidence" value="ECO:0000318"/>
    <property type="project" value="GO_Central"/>
</dbReference>
<dbReference type="DisProt" id="DP01277"/>
<dbReference type="Gene3D" id="2.60.40.10">
    <property type="entry name" value="Immunoglobulins"/>
    <property type="match status" value="1"/>
</dbReference>
<dbReference type="IDEAL" id="IID00216"/>
<dbReference type="InterPro" id="IPR026085">
    <property type="entry name" value="ATF7-int"/>
</dbReference>
<dbReference type="InterPro" id="IPR031870">
    <property type="entry name" value="ATF7IP_BD"/>
</dbReference>
<dbReference type="InterPro" id="IPR056565">
    <property type="entry name" value="Fn3_ATF7IP"/>
</dbReference>
<dbReference type="InterPro" id="IPR003961">
    <property type="entry name" value="FN3_dom"/>
</dbReference>
<dbReference type="InterPro" id="IPR036116">
    <property type="entry name" value="FN3_sf"/>
</dbReference>
<dbReference type="InterPro" id="IPR013783">
    <property type="entry name" value="Ig-like_fold"/>
</dbReference>
<dbReference type="PANTHER" id="PTHR23210">
    <property type="entry name" value="ACTIVATING TRANSCRIPTION FACTOR 7 INTERACTING PROTEIN"/>
    <property type="match status" value="1"/>
</dbReference>
<dbReference type="PANTHER" id="PTHR23210:SF22">
    <property type="entry name" value="ACTIVATING TRANSCRIPTION FACTOR 7-INTERACTING PROTEIN 1"/>
    <property type="match status" value="1"/>
</dbReference>
<dbReference type="Pfam" id="PF16788">
    <property type="entry name" value="ATF7IP_BD"/>
    <property type="match status" value="1"/>
</dbReference>
<dbReference type="Pfam" id="PF16794">
    <property type="entry name" value="fn3_4"/>
    <property type="match status" value="1"/>
</dbReference>
<dbReference type="SUPFAM" id="SSF49265">
    <property type="entry name" value="Fibronectin type III"/>
    <property type="match status" value="1"/>
</dbReference>
<dbReference type="PROSITE" id="PS50853">
    <property type="entry name" value="FN3"/>
    <property type="match status" value="1"/>
</dbReference>
<accession>Q6VMQ6</accession>
<accession>F5GX74</accession>
<accession>G3V1U0</accession>
<accession>Q4G0T9</accession>
<accession>Q6P3T3</accession>
<accession>Q86XW5</accession>
<accession>Q9NVJ9</accession>
<accession>Q9NWC2</accession>
<accession>Q9Y4X8</accession>
<keyword id="KW-0002">3D-structure</keyword>
<keyword id="KW-0007">Acetylation</keyword>
<keyword id="KW-0010">Activator</keyword>
<keyword id="KW-0025">Alternative splicing</keyword>
<keyword id="KW-0175">Coiled coil</keyword>
<keyword id="KW-0945">Host-virus interaction</keyword>
<keyword id="KW-1017">Isopeptide bond</keyword>
<keyword id="KW-0539">Nucleus</keyword>
<keyword id="KW-0597">Phosphoprotein</keyword>
<keyword id="KW-1267">Proteomics identification</keyword>
<keyword id="KW-1185">Reference proteome</keyword>
<keyword id="KW-0678">Repressor</keyword>
<keyword id="KW-0804">Transcription</keyword>
<keyword id="KW-0805">Transcription regulation</keyword>
<keyword id="KW-0832">Ubl conjugation</keyword>
<proteinExistence type="evidence at protein level"/>
<reference key="1">
    <citation type="journal article" date="2003" name="Mol. Cell">
        <title>mAM facilitates conversion by ESET of dimethyl to trimethyl lysine 9 of histone H3 to cause transcriptional repression.</title>
        <authorList>
            <person name="Wang H."/>
            <person name="An W."/>
            <person name="Cao R."/>
            <person name="Xia L."/>
            <person name="Erdjument-Bromage H."/>
            <person name="Chatton B."/>
            <person name="Tempst P."/>
            <person name="Roeder R.G."/>
            <person name="Zhang Y."/>
        </authorList>
    </citation>
    <scope>NUCLEOTIDE SEQUENCE [MRNA] (ISOFORM 1)</scope>
    <scope>IDENTIFICATION BY MASS SPECTROMETRY</scope>
    <scope>FUNCTION</scope>
    <scope>INTERACTION WITH SETDB1</scope>
    <scope>VARIANT ARG-530</scope>
</reference>
<reference key="2">
    <citation type="journal article" date="2003" name="Mol. Cell. Biol.">
        <title>MCAF mediates MBD1-dependent transcriptional repression.</title>
        <authorList>
            <person name="Fujita N."/>
            <person name="Watanabe S."/>
            <person name="Ichimura T."/>
            <person name="Ohkuma Y."/>
            <person name="Chiba T."/>
            <person name="Saya H."/>
            <person name="Nakao M."/>
        </authorList>
    </citation>
    <scope>NUCLEOTIDE SEQUENCE [MRNA] (ISOFORM 1)</scope>
    <scope>FUNCTION</scope>
    <scope>INTERACTION WITH MBD1</scope>
    <scope>VARIANT ILE-348</scope>
</reference>
<reference key="3">
    <citation type="journal article" date="2006" name="Nature">
        <title>The finished DNA sequence of human chromosome 12.</title>
        <authorList>
            <person name="Scherer S.E."/>
            <person name="Muzny D.M."/>
            <person name="Buhay C.J."/>
            <person name="Chen R."/>
            <person name="Cree A."/>
            <person name="Ding Y."/>
            <person name="Dugan-Rocha S."/>
            <person name="Gill R."/>
            <person name="Gunaratne P."/>
            <person name="Harris R.A."/>
            <person name="Hawes A.C."/>
            <person name="Hernandez J."/>
            <person name="Hodgson A.V."/>
            <person name="Hume J."/>
            <person name="Jackson A."/>
            <person name="Khan Z.M."/>
            <person name="Kovar-Smith C."/>
            <person name="Lewis L.R."/>
            <person name="Lozado R.J."/>
            <person name="Metzker M.L."/>
            <person name="Milosavljevic A."/>
            <person name="Miner G.R."/>
            <person name="Montgomery K.T."/>
            <person name="Morgan M.B."/>
            <person name="Nazareth L.V."/>
            <person name="Scott G."/>
            <person name="Sodergren E."/>
            <person name="Song X.-Z."/>
            <person name="Steffen D."/>
            <person name="Lovering R.C."/>
            <person name="Wheeler D.A."/>
            <person name="Worley K.C."/>
            <person name="Yuan Y."/>
            <person name="Zhang Z."/>
            <person name="Adams C.Q."/>
            <person name="Ansari-Lari M.A."/>
            <person name="Ayele M."/>
            <person name="Brown M.J."/>
            <person name="Chen G."/>
            <person name="Chen Z."/>
            <person name="Clerc-Blankenburg K.P."/>
            <person name="Davis C."/>
            <person name="Delgado O."/>
            <person name="Dinh H.H."/>
            <person name="Draper H."/>
            <person name="Gonzalez-Garay M.L."/>
            <person name="Havlak P."/>
            <person name="Jackson L.R."/>
            <person name="Jacob L.S."/>
            <person name="Kelly S.H."/>
            <person name="Li L."/>
            <person name="Li Z."/>
            <person name="Liu J."/>
            <person name="Liu W."/>
            <person name="Lu J."/>
            <person name="Maheshwari M."/>
            <person name="Nguyen B.-V."/>
            <person name="Okwuonu G.O."/>
            <person name="Pasternak S."/>
            <person name="Perez L.M."/>
            <person name="Plopper F.J.H."/>
            <person name="Santibanez J."/>
            <person name="Shen H."/>
            <person name="Tabor P.E."/>
            <person name="Verduzco D."/>
            <person name="Waldron L."/>
            <person name="Wang Q."/>
            <person name="Williams G.A."/>
            <person name="Zhang J."/>
            <person name="Zhou J."/>
            <person name="Allen C.C."/>
            <person name="Amin A.G."/>
            <person name="Anyalebechi V."/>
            <person name="Bailey M."/>
            <person name="Barbaria J.A."/>
            <person name="Bimage K.E."/>
            <person name="Bryant N.P."/>
            <person name="Burch P.E."/>
            <person name="Burkett C.E."/>
            <person name="Burrell K.L."/>
            <person name="Calderon E."/>
            <person name="Cardenas V."/>
            <person name="Carter K."/>
            <person name="Casias K."/>
            <person name="Cavazos I."/>
            <person name="Cavazos S.R."/>
            <person name="Ceasar H."/>
            <person name="Chacko J."/>
            <person name="Chan S.N."/>
            <person name="Chavez D."/>
            <person name="Christopoulos C."/>
            <person name="Chu J."/>
            <person name="Cockrell R."/>
            <person name="Cox C.D."/>
            <person name="Dang M."/>
            <person name="Dathorne S.R."/>
            <person name="David R."/>
            <person name="Davis C.M."/>
            <person name="Davy-Carroll L."/>
            <person name="Deshazo D.R."/>
            <person name="Donlin J.E."/>
            <person name="D'Souza L."/>
            <person name="Eaves K.A."/>
            <person name="Egan A."/>
            <person name="Emery-Cohen A.J."/>
            <person name="Escotto M."/>
            <person name="Flagg N."/>
            <person name="Forbes L.D."/>
            <person name="Gabisi A.M."/>
            <person name="Garza M."/>
            <person name="Hamilton C."/>
            <person name="Henderson N."/>
            <person name="Hernandez O."/>
            <person name="Hines S."/>
            <person name="Hogues M.E."/>
            <person name="Huang M."/>
            <person name="Idlebird D.G."/>
            <person name="Johnson R."/>
            <person name="Jolivet A."/>
            <person name="Jones S."/>
            <person name="Kagan R."/>
            <person name="King L.M."/>
            <person name="Leal B."/>
            <person name="Lebow H."/>
            <person name="Lee S."/>
            <person name="LeVan J.M."/>
            <person name="Lewis L.C."/>
            <person name="London P."/>
            <person name="Lorensuhewa L.M."/>
            <person name="Loulseged H."/>
            <person name="Lovett D.A."/>
            <person name="Lucier A."/>
            <person name="Lucier R.L."/>
            <person name="Ma J."/>
            <person name="Madu R.C."/>
            <person name="Mapua P."/>
            <person name="Martindale A.D."/>
            <person name="Martinez E."/>
            <person name="Massey E."/>
            <person name="Mawhiney S."/>
            <person name="Meador M.G."/>
            <person name="Mendez S."/>
            <person name="Mercado C."/>
            <person name="Mercado I.C."/>
            <person name="Merritt C.E."/>
            <person name="Miner Z.L."/>
            <person name="Minja E."/>
            <person name="Mitchell T."/>
            <person name="Mohabbat F."/>
            <person name="Mohabbat K."/>
            <person name="Montgomery B."/>
            <person name="Moore N."/>
            <person name="Morris S."/>
            <person name="Munidasa M."/>
            <person name="Ngo R.N."/>
            <person name="Nguyen N.B."/>
            <person name="Nickerson E."/>
            <person name="Nwaokelemeh O.O."/>
            <person name="Nwokenkwo S."/>
            <person name="Obregon M."/>
            <person name="Oguh M."/>
            <person name="Oragunye N."/>
            <person name="Oviedo R.J."/>
            <person name="Parish B.J."/>
            <person name="Parker D.N."/>
            <person name="Parrish J."/>
            <person name="Parks K.L."/>
            <person name="Paul H.A."/>
            <person name="Payton B.A."/>
            <person name="Perez A."/>
            <person name="Perrin W."/>
            <person name="Pickens A."/>
            <person name="Primus E.L."/>
            <person name="Pu L.-L."/>
            <person name="Puazo M."/>
            <person name="Quiles M.M."/>
            <person name="Quiroz J.B."/>
            <person name="Rabata D."/>
            <person name="Reeves K."/>
            <person name="Ruiz S.J."/>
            <person name="Shao H."/>
            <person name="Sisson I."/>
            <person name="Sonaike T."/>
            <person name="Sorelle R.P."/>
            <person name="Sutton A.E."/>
            <person name="Svatek A.F."/>
            <person name="Svetz L.A."/>
            <person name="Tamerisa K.S."/>
            <person name="Taylor T.R."/>
            <person name="Teague B."/>
            <person name="Thomas N."/>
            <person name="Thorn R.D."/>
            <person name="Trejos Z.Y."/>
            <person name="Trevino B.K."/>
            <person name="Ukegbu O.N."/>
            <person name="Urban J.B."/>
            <person name="Vasquez L.I."/>
            <person name="Vera V.A."/>
            <person name="Villasana D.M."/>
            <person name="Wang L."/>
            <person name="Ward-Moore S."/>
            <person name="Warren J.T."/>
            <person name="Wei X."/>
            <person name="White F."/>
            <person name="Williamson A.L."/>
            <person name="Wleczyk R."/>
            <person name="Wooden H.S."/>
            <person name="Wooden S.H."/>
            <person name="Yen J."/>
            <person name="Yoon L."/>
            <person name="Yoon V."/>
            <person name="Zorrilla S.E."/>
            <person name="Nelson D."/>
            <person name="Kucherlapati R."/>
            <person name="Weinstock G."/>
            <person name="Gibbs R.A."/>
        </authorList>
    </citation>
    <scope>NUCLEOTIDE SEQUENCE [LARGE SCALE GENOMIC DNA]</scope>
</reference>
<reference key="4">
    <citation type="submission" date="2005-07" db="EMBL/GenBank/DDBJ databases">
        <authorList>
            <person name="Mural R.J."/>
            <person name="Istrail S."/>
            <person name="Sutton G.G."/>
            <person name="Florea L."/>
            <person name="Halpern A.L."/>
            <person name="Mobarry C.M."/>
            <person name="Lippert R."/>
            <person name="Walenz B."/>
            <person name="Shatkay H."/>
            <person name="Dew I."/>
            <person name="Miller J.R."/>
            <person name="Flanigan M.J."/>
            <person name="Edwards N.J."/>
            <person name="Bolanos R."/>
            <person name="Fasulo D."/>
            <person name="Halldorsson B.V."/>
            <person name="Hannenhalli S."/>
            <person name="Turner R."/>
            <person name="Yooseph S."/>
            <person name="Lu F."/>
            <person name="Nusskern D.R."/>
            <person name="Shue B.C."/>
            <person name="Zheng X.H."/>
            <person name="Zhong F."/>
            <person name="Delcher A.L."/>
            <person name="Huson D.H."/>
            <person name="Kravitz S.A."/>
            <person name="Mouchard L."/>
            <person name="Reinert K."/>
            <person name="Remington K.A."/>
            <person name="Clark A.G."/>
            <person name="Waterman M.S."/>
            <person name="Eichler E.E."/>
            <person name="Adams M.D."/>
            <person name="Hunkapiller M.W."/>
            <person name="Myers E.W."/>
            <person name="Venter J.C."/>
        </authorList>
    </citation>
    <scope>NUCLEOTIDE SEQUENCE [LARGE SCALE GENOMIC DNA]</scope>
</reference>
<reference key="5">
    <citation type="journal article" date="2004" name="Genome Res.">
        <title>The status, quality, and expansion of the NIH full-length cDNA project: the Mammalian Gene Collection (MGC).</title>
        <authorList>
            <consortium name="The MGC Project Team"/>
        </authorList>
    </citation>
    <scope>NUCLEOTIDE SEQUENCE [LARGE SCALE MRNA] (ISOFORM 2)</scope>
    <scope>NUCLEOTIDE SEQUENCE [LARGE SCALE MRNA] OF 1-513</scope>
    <scope>VARIANT ARG-530</scope>
    <source>
        <tissue>Brain</tissue>
        <tissue>PNS</tissue>
    </source>
</reference>
<reference key="6">
    <citation type="journal article" date="2004" name="Nat. Genet.">
        <title>Complete sequencing and characterization of 21,243 full-length human cDNAs.</title>
        <authorList>
            <person name="Ota T."/>
            <person name="Suzuki Y."/>
            <person name="Nishikawa T."/>
            <person name="Otsuki T."/>
            <person name="Sugiyama T."/>
            <person name="Irie R."/>
            <person name="Wakamatsu A."/>
            <person name="Hayashi K."/>
            <person name="Sato H."/>
            <person name="Nagai K."/>
            <person name="Kimura K."/>
            <person name="Makita H."/>
            <person name="Sekine M."/>
            <person name="Obayashi M."/>
            <person name="Nishi T."/>
            <person name="Shibahara T."/>
            <person name="Tanaka T."/>
            <person name="Ishii S."/>
            <person name="Yamamoto J."/>
            <person name="Saito K."/>
            <person name="Kawai Y."/>
            <person name="Isono Y."/>
            <person name="Nakamura Y."/>
            <person name="Nagahari K."/>
            <person name="Murakami K."/>
            <person name="Yasuda T."/>
            <person name="Iwayanagi T."/>
            <person name="Wagatsuma M."/>
            <person name="Shiratori A."/>
            <person name="Sudo H."/>
            <person name="Hosoiri T."/>
            <person name="Kaku Y."/>
            <person name="Kodaira H."/>
            <person name="Kondo H."/>
            <person name="Sugawara M."/>
            <person name="Takahashi M."/>
            <person name="Kanda K."/>
            <person name="Yokoi T."/>
            <person name="Furuya T."/>
            <person name="Kikkawa E."/>
            <person name="Omura Y."/>
            <person name="Abe K."/>
            <person name="Kamihara K."/>
            <person name="Katsuta N."/>
            <person name="Sato K."/>
            <person name="Tanikawa M."/>
            <person name="Yamazaki M."/>
            <person name="Ninomiya K."/>
            <person name="Ishibashi T."/>
            <person name="Yamashita H."/>
            <person name="Murakawa K."/>
            <person name="Fujimori K."/>
            <person name="Tanai H."/>
            <person name="Kimata M."/>
            <person name="Watanabe M."/>
            <person name="Hiraoka S."/>
            <person name="Chiba Y."/>
            <person name="Ishida S."/>
            <person name="Ono Y."/>
            <person name="Takiguchi S."/>
            <person name="Watanabe S."/>
            <person name="Yosida M."/>
            <person name="Hotuta T."/>
            <person name="Kusano J."/>
            <person name="Kanehori K."/>
            <person name="Takahashi-Fujii A."/>
            <person name="Hara H."/>
            <person name="Tanase T.-O."/>
            <person name="Nomura Y."/>
            <person name="Togiya S."/>
            <person name="Komai F."/>
            <person name="Hara R."/>
            <person name="Takeuchi K."/>
            <person name="Arita M."/>
            <person name="Imose N."/>
            <person name="Musashino K."/>
            <person name="Yuuki H."/>
            <person name="Oshima A."/>
            <person name="Sasaki N."/>
            <person name="Aotsuka S."/>
            <person name="Yoshikawa Y."/>
            <person name="Matsunawa H."/>
            <person name="Ichihara T."/>
            <person name="Shiohata N."/>
            <person name="Sano S."/>
            <person name="Moriya S."/>
            <person name="Momiyama H."/>
            <person name="Satoh N."/>
            <person name="Takami S."/>
            <person name="Terashima Y."/>
            <person name="Suzuki O."/>
            <person name="Nakagawa S."/>
            <person name="Senoh A."/>
            <person name="Mizoguchi H."/>
            <person name="Goto Y."/>
            <person name="Shimizu F."/>
            <person name="Wakebe H."/>
            <person name="Hishigaki H."/>
            <person name="Watanabe T."/>
            <person name="Sugiyama A."/>
            <person name="Takemoto M."/>
            <person name="Kawakami B."/>
            <person name="Yamazaki M."/>
            <person name="Watanabe K."/>
            <person name="Kumagai A."/>
            <person name="Itakura S."/>
            <person name="Fukuzumi Y."/>
            <person name="Fujimori Y."/>
            <person name="Komiyama M."/>
            <person name="Tashiro H."/>
            <person name="Tanigami A."/>
            <person name="Fujiwara T."/>
            <person name="Ono T."/>
            <person name="Yamada K."/>
            <person name="Fujii Y."/>
            <person name="Ozaki K."/>
            <person name="Hirao M."/>
            <person name="Ohmori Y."/>
            <person name="Kawabata A."/>
            <person name="Hikiji T."/>
            <person name="Kobatake N."/>
            <person name="Inagaki H."/>
            <person name="Ikema Y."/>
            <person name="Okamoto S."/>
            <person name="Okitani R."/>
            <person name="Kawakami T."/>
            <person name="Noguchi S."/>
            <person name="Itoh T."/>
            <person name="Shigeta K."/>
            <person name="Senba T."/>
            <person name="Matsumura K."/>
            <person name="Nakajima Y."/>
            <person name="Mizuno T."/>
            <person name="Morinaga M."/>
            <person name="Sasaki M."/>
            <person name="Togashi T."/>
            <person name="Oyama M."/>
            <person name="Hata H."/>
            <person name="Watanabe M."/>
            <person name="Komatsu T."/>
            <person name="Mizushima-Sugano J."/>
            <person name="Satoh T."/>
            <person name="Shirai Y."/>
            <person name="Takahashi Y."/>
            <person name="Nakagawa K."/>
            <person name="Okumura K."/>
            <person name="Nagase T."/>
            <person name="Nomura N."/>
            <person name="Kikuchi H."/>
            <person name="Masuho Y."/>
            <person name="Yamashita R."/>
            <person name="Nakai K."/>
            <person name="Yada T."/>
            <person name="Nakamura Y."/>
            <person name="Ohara O."/>
            <person name="Isogai T."/>
            <person name="Sugano S."/>
        </authorList>
    </citation>
    <scope>NUCLEOTIDE SEQUENCE [LARGE SCALE MRNA] OF 479-1270 AND 479-1270 (ISOFORM 1)</scope>
    <scope>VARIANT ARG-530</scope>
    <source>
        <tissue>Embryo</tissue>
        <tissue>Teratocarcinoma</tissue>
    </source>
</reference>
<reference key="7">
    <citation type="journal article" date="2000" name="Mol. Cell. Biochem.">
        <title>A set of proteins interacting with transcription factor Sp1 identified in a two-hybrid screening.</title>
        <authorList>
            <person name="Gunther M."/>
            <person name="Laithier M."/>
            <person name="Brison O."/>
        </authorList>
    </citation>
    <scope>NUCLEOTIDE SEQUENCE [MRNA] OF 545-1058 (ISOFORM 1)</scope>
    <scope>INTERACTION WITH SP1</scope>
    <source>
        <tissue>Colon</tissue>
    </source>
</reference>
<reference key="8">
    <citation type="journal article" date="2003" name="Biochem. J.">
        <title>Analysis of zinc-fingers and homeoboxes (ZHX)-1-interacting proteins: molecular cloning and characterization of a member of the ZHX family, ZHX3.</title>
        <authorList>
            <person name="Yamada K."/>
            <person name="Kawata H."/>
            <person name="Shou Z."/>
            <person name="Hirano S."/>
            <person name="Mizutani T."/>
            <person name="Yazawa T."/>
            <person name="Sekiguchi T."/>
            <person name="Yoshino M."/>
            <person name="Kajitani T."/>
            <person name="Miyamoto K."/>
        </authorList>
    </citation>
    <scope>INTERACTION WITH ZHX1</scope>
</reference>
<reference key="9">
    <citation type="journal article" date="2005" name="J. Biol. Chem.">
        <title>Transcriptional repression and heterochromatin formation by MBD1 and MCAF/AM family proteins.</title>
        <authorList>
            <person name="Ichimura T."/>
            <person name="Watanabe S."/>
            <person name="Sakamoto Y."/>
            <person name="Aoto T."/>
            <person name="Fujita N."/>
            <person name="Nakao M."/>
        </authorList>
    </citation>
    <scope>INTERACTION WITH SETDB1; MBD1 AND SP1</scope>
    <scope>MUTAGENESIS OF LEU-1224</scope>
</reference>
<reference key="10">
    <citation type="journal article" date="2005" name="Nucleic Acids Res.">
        <title>Activation of Sp1-mediated transcription by Rta of Epstein-Barr virus via an interaction with MCAF1.</title>
        <authorList>
            <person name="Chang L.-K."/>
            <person name="Chung J.-Y."/>
            <person name="Hong Y.-R."/>
            <person name="Ichimura T."/>
            <person name="Nakao M."/>
            <person name="Liu S.-T."/>
        </authorList>
    </citation>
    <scope>INTERACTION WITH EPSTEIN-BARR VIRUS/EBV PROTEIN BRLF1 (MICROBIAL INFECTION)</scope>
</reference>
<reference key="11">
    <citation type="journal article" date="2006" name="Cell">
        <title>Global, in vivo, and site-specific phosphorylation dynamics in signaling networks.</title>
        <authorList>
            <person name="Olsen J.V."/>
            <person name="Blagoev B."/>
            <person name="Gnad F."/>
            <person name="Macek B."/>
            <person name="Kumar C."/>
            <person name="Mortensen P."/>
            <person name="Mann M."/>
        </authorList>
    </citation>
    <scope>PHOSPHORYLATION [LARGE SCALE ANALYSIS] AT SER-113 AND SER-673</scope>
    <scope>IDENTIFICATION BY MASS SPECTROMETRY [LARGE SCALE ANALYSIS]</scope>
    <source>
        <tissue>Cervix carcinoma</tissue>
    </source>
</reference>
<reference key="12">
    <citation type="journal article" date="2006" name="J. Biol. Chem.">
        <title>Involvement of SUMO modification in MBD1- and MCAF1-mediated heterochromatin formation.</title>
        <authorList>
            <person name="Uchimura Y."/>
            <person name="Ichimura T."/>
            <person name="Uwada J."/>
            <person name="Tachibana T."/>
            <person name="Sugahara S."/>
            <person name="Nakao M."/>
            <person name="Saitoh H."/>
        </authorList>
    </citation>
    <scope>INTERACTION WITH SUMO AND MBD1</scope>
    <scope>MUTAGENESIS OF ASP-968 AND LEU-969</scope>
</reference>
<reference key="13">
    <citation type="journal article" date="2006" name="Nat. Biotechnol.">
        <title>A probability-based approach for high-throughput protein phosphorylation analysis and site localization.</title>
        <authorList>
            <person name="Beausoleil S.A."/>
            <person name="Villen J."/>
            <person name="Gerber S.A."/>
            <person name="Rush J."/>
            <person name="Gygi S.P."/>
        </authorList>
    </citation>
    <scope>IDENTIFICATION BY MASS SPECTROMETRY [LARGE SCALE ANALYSIS]</scope>
    <source>
        <tissue>Cervix carcinoma</tissue>
    </source>
</reference>
<reference key="14">
    <citation type="journal article" date="2008" name="Proc. Natl. Acad. Sci. U.S.A.">
        <title>A quantitative atlas of mitotic phosphorylation.</title>
        <authorList>
            <person name="Dephoure N."/>
            <person name="Zhou C."/>
            <person name="Villen J."/>
            <person name="Beausoleil S.A."/>
            <person name="Bakalarski C.E."/>
            <person name="Elledge S.J."/>
            <person name="Gygi S.P."/>
        </authorList>
    </citation>
    <scope>PHOSPHORYLATION [LARGE SCALE ANALYSIS] AT SER-113; THR-118; SER-473 AND SER-899</scope>
    <scope>IDENTIFICATION BY MASS SPECTROMETRY [LARGE SCALE ANALYSIS]</scope>
    <source>
        <tissue>Cervix carcinoma</tissue>
    </source>
</reference>
<reference key="15">
    <citation type="journal article" date="2009" name="Anal. Chem.">
        <title>Lys-N and trypsin cover complementary parts of the phosphoproteome in a refined SCX-based approach.</title>
        <authorList>
            <person name="Gauci S."/>
            <person name="Helbig A.O."/>
            <person name="Slijper M."/>
            <person name="Krijgsveld J."/>
            <person name="Heck A.J."/>
            <person name="Mohammed S."/>
        </authorList>
    </citation>
    <scope>IDENTIFICATION BY MASS SPECTROMETRY [LARGE SCALE ANALYSIS]</scope>
</reference>
<reference key="16">
    <citation type="journal article" date="2009" name="J. Biol. Chem.">
        <title>MCAF1/AM is involved in Sp1-mediated maintenance of cancer-associated telomerase activity.</title>
        <authorList>
            <person name="Liu L."/>
            <person name="Ishihara K."/>
            <person name="Ichimura T."/>
            <person name="Fujita N."/>
            <person name="Hino S."/>
            <person name="Tomita S."/>
            <person name="Watanabe S."/>
            <person name="Saitoh N."/>
            <person name="Ito T."/>
            <person name="Nakao M."/>
        </authorList>
    </citation>
    <scope>FUNCTION</scope>
    <scope>INTERACTION WITH ERCC2; ERCC3; GTF2E1; GTF2E2; POLR2A AND SP1</scope>
    <scope>SUBCELLULAR LOCATION</scope>
    <scope>TISSUE SPECIFICITY</scope>
</reference>
<reference key="17">
    <citation type="journal article" date="2009" name="Sci. Signal.">
        <title>Quantitative phosphoproteomic analysis of T cell receptor signaling reveals system-wide modulation of protein-protein interactions.</title>
        <authorList>
            <person name="Mayya V."/>
            <person name="Lundgren D.H."/>
            <person name="Hwang S.-I."/>
            <person name="Rezaul K."/>
            <person name="Wu L."/>
            <person name="Eng J.K."/>
            <person name="Rodionov V."/>
            <person name="Han D.K."/>
        </authorList>
    </citation>
    <scope>IDENTIFICATION BY MASS SPECTROMETRY [LARGE SCALE ANALYSIS]</scope>
    <source>
        <tissue>Leukemic T-cell</tissue>
    </source>
</reference>
<reference key="18">
    <citation type="journal article" date="2011" name="BMC Syst. Biol.">
        <title>Initial characterization of the human central proteome.</title>
        <authorList>
            <person name="Burkard T.R."/>
            <person name="Planyavsky M."/>
            <person name="Kaupe I."/>
            <person name="Breitwieser F.P."/>
            <person name="Buerckstuemmer T."/>
            <person name="Bennett K.L."/>
            <person name="Superti-Furga G."/>
            <person name="Colinge J."/>
        </authorList>
    </citation>
    <scope>IDENTIFICATION BY MASS SPECTROMETRY [LARGE SCALE ANALYSIS]</scope>
</reference>
<reference key="19">
    <citation type="journal article" date="2011" name="Sci. Signal.">
        <title>System-wide temporal characterization of the proteome and phosphoproteome of human embryonic stem cell differentiation.</title>
        <authorList>
            <person name="Rigbolt K.T."/>
            <person name="Prokhorova T.A."/>
            <person name="Akimov V."/>
            <person name="Henningsen J."/>
            <person name="Johansen P.T."/>
            <person name="Kratchmarova I."/>
            <person name="Kassem M."/>
            <person name="Mann M."/>
            <person name="Olsen J.V."/>
            <person name="Blagoev B."/>
        </authorList>
    </citation>
    <scope>PHOSPHORYLATION [LARGE SCALE ANALYSIS] AT SER-477; SER-496; SER-559 AND SER-673</scope>
    <scope>IDENTIFICATION BY MASS SPECTROMETRY [LARGE SCALE ANALYSIS]</scope>
</reference>
<reference key="20">
    <citation type="journal article" date="2012" name="Proc. Natl. Acad. Sci. U.S.A.">
        <title>N-terminal acetylome analyses and functional insights of the N-terminal acetyltransferase NatB.</title>
        <authorList>
            <person name="Van Damme P."/>
            <person name="Lasa M."/>
            <person name="Polevoda B."/>
            <person name="Gazquez C."/>
            <person name="Elosegui-Artola A."/>
            <person name="Kim D.S."/>
            <person name="De Juan-Pardo E."/>
            <person name="Demeyer K."/>
            <person name="Hole K."/>
            <person name="Larrea E."/>
            <person name="Timmerman E."/>
            <person name="Prieto J."/>
            <person name="Arnesen T."/>
            <person name="Sherman F."/>
            <person name="Gevaert K."/>
            <person name="Aldabe R."/>
        </authorList>
    </citation>
    <scope>ACETYLATION [LARGE SCALE ANALYSIS] AT MET-1</scope>
    <scope>IDENTIFICATION BY MASS SPECTROMETRY [LARGE SCALE ANALYSIS]</scope>
</reference>
<reference key="21">
    <citation type="journal article" date="2013" name="J. Proteome Res.">
        <title>Toward a comprehensive characterization of a human cancer cell phosphoproteome.</title>
        <authorList>
            <person name="Zhou H."/>
            <person name="Di Palma S."/>
            <person name="Preisinger C."/>
            <person name="Peng M."/>
            <person name="Polat A.N."/>
            <person name="Heck A.J."/>
            <person name="Mohammed S."/>
        </authorList>
    </citation>
    <scope>PHOSPHORYLATION [LARGE SCALE ANALYSIS] AT SER-57; SER-445; SER-474; SER-477 AND SER-899</scope>
    <scope>IDENTIFICATION BY MASS SPECTROMETRY [LARGE SCALE ANALYSIS]</scope>
    <source>
        <tissue>Cervix carcinoma</tissue>
        <tissue>Erythroleukemia</tissue>
    </source>
</reference>
<reference key="22">
    <citation type="journal article" date="2014" name="J. Proteomics">
        <title>An enzyme assisted RP-RPLC approach for in-depth analysis of human liver phosphoproteome.</title>
        <authorList>
            <person name="Bian Y."/>
            <person name="Song C."/>
            <person name="Cheng K."/>
            <person name="Dong M."/>
            <person name="Wang F."/>
            <person name="Huang J."/>
            <person name="Sun D."/>
            <person name="Wang L."/>
            <person name="Ye M."/>
            <person name="Zou H."/>
        </authorList>
    </citation>
    <scope>PHOSPHORYLATION [LARGE SCALE ANALYSIS] AT SER-113; SER-496; SER-559 AND SER-673</scope>
    <scope>IDENTIFICATION BY MASS SPECTROMETRY [LARGE SCALE ANALYSIS]</scope>
    <source>
        <tissue>Liver</tissue>
    </source>
</reference>
<reference key="23">
    <citation type="journal article" date="2016" name="Cell Rep.">
        <title>ATF7IP-Mediated Stabilization of the Histone Methyltransferase SETDB1 Is Essential for Heterochromatin Formation by the HUSH Complex.</title>
        <authorList>
            <person name="Timms R.T."/>
            <person name="Tchasovnikarova I.A."/>
            <person name="Antrobus R."/>
            <person name="Dougan G."/>
            <person name="Lehner P.J."/>
        </authorList>
    </citation>
    <scope>FUNCTION</scope>
    <scope>INTERACTION WITH SETDB1</scope>
    <scope>SUBCELLULAR LOCATION</scope>
</reference>
<reference key="24">
    <citation type="journal article" date="2017" name="Nat. Struct. Mol. Biol.">
        <title>Site-specific mapping of the human SUMO proteome reveals co-modification with phosphorylation.</title>
        <authorList>
            <person name="Hendriks I.A."/>
            <person name="Lyon D."/>
            <person name="Young C."/>
            <person name="Jensen L.J."/>
            <person name="Vertegaal A.C."/>
            <person name="Nielsen M.L."/>
        </authorList>
    </citation>
    <scope>SUMOYLATION [LARGE SCALE ANALYSIS] AT LYS-33; LYS-558; LYS-910 AND LYS-938</scope>
    <scope>IDENTIFICATION BY MASS SPECTROMETRY [LARGE SCALE ANALYSIS]</scope>
</reference>
<reference key="25">
    <citation type="journal article" date="2008" name="J. Biol. Chem.">
        <title>Structure of the small ubiquitin-like modifier (SUMO)-interacting motif of MBD1-containing chromatin-associated factor 1 bound to SUMO-3.</title>
        <authorList>
            <person name="Sekiyama N."/>
            <person name="Ikegami T."/>
            <person name="Yamane T."/>
            <person name="Ikeguchi M."/>
            <person name="Uchimura Y."/>
            <person name="Baba D."/>
            <person name="Ariyoshi M."/>
            <person name="Tochio H."/>
            <person name="Saitoh H."/>
            <person name="Shirakawa M."/>
        </authorList>
    </citation>
    <scope>STRUCTURE BY NMR OF 938-981 IN COMPLEX WITH SUMO3</scope>
</reference>
<comment type="function">
    <text evidence="8 9 16 17">Recruiter that couples transcriptional factors to general transcription apparatus and thereby modulates transcription regulation and chromatin formation. Can both act as an activator or a repressor depending on the context. Required for HUSH-mediated heterochromatin formation and gene silencing (PubMed:27732843). Mediates MBD1-dependent transcriptional repression, probably by recruiting complexes containing SETDB1 (PubMed:12665582). Stabilizes SETDB1, is required to stimulate histone methyltransferase activity of SETDB1 and facilitates the conversion of dimethylated to trimethylated H3 'Lys-9' (H3K9me3). The complex formed with MBD1 and SETDB1 represses transcription and couples DNA methylation and histone H3 'Lys-9' trimethylation (H3K9me3) (PubMed:14536086, PubMed:27732843). Facilitates telomerase TERT and TERC gene expression by SP1 in cancer cells (PubMed:19106100).</text>
</comment>
<comment type="subunit">
    <text evidence="6 7 8 9 12 14 15 16 17">Interacts with MBD1; the interaction is enhanced when MBD1 is sumoylated (PubMed:12665582, PubMed:16757475). Interacts with SETDB1; the interaction protects SETDB1 from proteasomal degradation and is required to stimulate histone methyltransferase activity and facilitate the conversion of dimethylated to trimethylated H3 'Lys-9' (PubMed:14536086, PubMed:15691849, PubMed:27732843). Interacts with SUMO ubiquitin-like proteins (SUMO1, SUNO2 and SUMO3), with a preference for SUMO2 and SUMO3 (PubMed:16757475, PubMed:18842587). Interacts with SP1, ATF7 and ZHX1 (PubMed:10976766, PubMed:12659632, PubMed:19106100). Interacts with the general transcription machinery, including ERCC2, ERCC3, GTF2E1, GTF2E2 and POLR2A (PubMed:19106100).</text>
</comment>
<comment type="subunit">
    <text evidence="13">(Microbial infection) Interacts with Epstein-Barr virus BRLF1/Rta protein, leading to the regulation of host genes in Epstein-Barr virus-infected cells.</text>
</comment>
<comment type="interaction">
    <interactant intactId="EBI-928732">
        <id>Q6VMQ6</id>
    </interactant>
    <interactant intactId="EBI-2807994">
        <id>Q8N8R7</id>
        <label>ARL14EP</label>
    </interactant>
    <organismsDiffer>false</organismsDiffer>
    <experiments>2</experiments>
</comment>
<comment type="interaction">
    <interactant intactId="EBI-928732">
        <id>Q6VMQ6</id>
    </interactant>
    <interactant intactId="EBI-529989">
        <id>Q9NRI5</id>
        <label>DISC1</label>
    </interactant>
    <organismsDiffer>false</organismsDiffer>
    <experiments>3</experiments>
</comment>
<comment type="interaction">
    <interactant intactId="EBI-928732">
        <id>Q6VMQ6</id>
    </interactant>
    <interactant intactId="EBI-372530">
        <id>Q9UHL9</id>
        <label>GTF2IRD1</label>
    </interactant>
    <organismsDiffer>false</organismsDiffer>
    <experiments>3</experiments>
</comment>
<comment type="interaction">
    <interactant intactId="EBI-12070560">
        <id>Q6VMQ6-2</id>
    </interactant>
    <interactant intactId="EBI-744366">
        <id>Q96KQ7</id>
        <label>EHMT2</label>
    </interactant>
    <organismsDiffer>false</organismsDiffer>
    <experiments>3</experiments>
</comment>
<comment type="subcellular location">
    <subcellularLocation>
        <location evidence="16 17">Nucleus</location>
    </subcellularLocation>
</comment>
<comment type="alternative products">
    <event type="alternative splicing"/>
    <isoform>
        <id>Q6VMQ6-1</id>
        <name>1</name>
        <sequence type="displayed"/>
    </isoform>
    <isoform>
        <id>Q6VMQ6-2</id>
        <name>2</name>
        <sequence type="described" ref="VSP_024035 VSP_024038 VSP_024039"/>
    </isoform>
    <isoform>
        <id>Q6VMQ6-4</id>
        <name>3</name>
        <sequence type="described" ref="VSP_055912"/>
    </isoform>
    <isoform>
        <id>Q6VMQ6-5</id>
        <name>4</name>
        <sequence type="described" ref="VSP_024035"/>
    </isoform>
</comment>
<comment type="tissue specificity">
    <text evidence="16">Detected at low levels in breast, lung and stomach; highly up-regulated in the corresponding cancerous tissues (at protein level).</text>
</comment>
<comment type="similarity">
    <text evidence="19">Belongs to the MCAF family.</text>
</comment>
<comment type="sequence caution" evidence="19">
    <conflict type="miscellaneous discrepancy">
        <sequence resource="EMBL-CDS" id="AAH37312"/>
    </conflict>
    <text>Contaminating sequence. Potential poly-A sequence.</text>
</comment>
<comment type="sequence caution" evidence="19">
    <conflict type="erroneous initiation">
        <sequence resource="EMBL" id="AK001001"/>
    </conflict>
    <text>Truncated N-terminus.</text>
</comment>
<comment type="sequence caution" evidence="19">
    <conflict type="miscellaneous discrepancy">
        <sequence resource="EMBL" id="AK001001"/>
    </conflict>
    <text>Intron retention.</text>
</comment>
<comment type="sequence caution" evidence="19">
    <conflict type="erroneous initiation">
        <sequence resource="EMBL-CDS" id="BAA91751"/>
    </conflict>
    <text>Truncated N-terminus.</text>
</comment>
<name>MCAF1_HUMAN</name>
<feature type="chain" id="PRO_0000281780" description="Activating transcription factor 7-interacting protein 1">
    <location>
        <begin position="1"/>
        <end position="1270"/>
    </location>
</feature>
<feature type="domain" description="Fibronectin type-III" evidence="4">
    <location>
        <begin position="1160"/>
        <end position="1270"/>
    </location>
</feature>
<feature type="region of interest" description="Disordered" evidence="5">
    <location>
        <begin position="104"/>
        <end position="223"/>
    </location>
</feature>
<feature type="region of interest" description="Disordered" evidence="5">
    <location>
        <begin position="235"/>
        <end position="402"/>
    </location>
</feature>
<feature type="region of interest" description="Disordered" evidence="5">
    <location>
        <begin position="455"/>
        <end position="570"/>
    </location>
</feature>
<feature type="region of interest" description="Interaction with SETDB1">
    <location>
        <begin position="562"/>
        <end position="817"/>
    </location>
</feature>
<feature type="region of interest" description="Disordered" evidence="5">
    <location>
        <begin position="658"/>
        <end position="685"/>
    </location>
</feature>
<feature type="region of interest" description="Disordered" evidence="5">
    <location>
        <begin position="822"/>
        <end position="862"/>
    </location>
</feature>
<feature type="region of interest" description="Disordered" evidence="5">
    <location>
        <begin position="886"/>
        <end position="906"/>
    </location>
</feature>
<feature type="region of interest" description="Disordered" evidence="5">
    <location>
        <begin position="918"/>
        <end position="1026"/>
    </location>
</feature>
<feature type="region of interest" description="Interaction with SUMO" evidence="14">
    <location>
        <begin position="965"/>
        <end position="975"/>
    </location>
</feature>
<feature type="region of interest" description="Disordered" evidence="5">
    <location>
        <begin position="1115"/>
        <end position="1160"/>
    </location>
</feature>
<feature type="region of interest" description="Interaction with MBD1">
    <location>
        <begin position="1154"/>
        <end position="1270"/>
    </location>
</feature>
<feature type="coiled-coil region" evidence="3">
    <location>
        <begin position="617"/>
        <end position="665"/>
    </location>
</feature>
<feature type="short sequence motif" description="Nuclear localization signal" evidence="1">
    <location>
        <begin position="553"/>
        <end position="571"/>
    </location>
</feature>
<feature type="compositionally biased region" description="Low complexity" evidence="5">
    <location>
        <begin position="132"/>
        <end position="203"/>
    </location>
</feature>
<feature type="compositionally biased region" description="Low complexity" evidence="5">
    <location>
        <begin position="248"/>
        <end position="269"/>
    </location>
</feature>
<feature type="compositionally biased region" description="Basic and acidic residues" evidence="5">
    <location>
        <begin position="310"/>
        <end position="327"/>
    </location>
</feature>
<feature type="compositionally biased region" description="Basic and acidic residues" evidence="5">
    <location>
        <begin position="333"/>
        <end position="343"/>
    </location>
</feature>
<feature type="compositionally biased region" description="Acidic residues" evidence="5">
    <location>
        <begin position="347"/>
        <end position="356"/>
    </location>
</feature>
<feature type="compositionally biased region" description="Basic and acidic residues" evidence="5">
    <location>
        <begin position="363"/>
        <end position="373"/>
    </location>
</feature>
<feature type="compositionally biased region" description="Polar residues" evidence="5">
    <location>
        <begin position="474"/>
        <end position="486"/>
    </location>
</feature>
<feature type="compositionally biased region" description="Acidic residues" evidence="5">
    <location>
        <begin position="496"/>
        <end position="509"/>
    </location>
</feature>
<feature type="compositionally biased region" description="Basic and acidic residues" evidence="5">
    <location>
        <begin position="524"/>
        <end position="552"/>
    </location>
</feature>
<feature type="compositionally biased region" description="Polar residues" evidence="5">
    <location>
        <begin position="822"/>
        <end position="834"/>
    </location>
</feature>
<feature type="compositionally biased region" description="Low complexity" evidence="5">
    <location>
        <begin position="843"/>
        <end position="854"/>
    </location>
</feature>
<feature type="compositionally biased region" description="Polar residues" evidence="5">
    <location>
        <begin position="918"/>
        <end position="942"/>
    </location>
</feature>
<feature type="compositionally biased region" description="Polar residues" evidence="5">
    <location>
        <begin position="950"/>
        <end position="964"/>
    </location>
</feature>
<feature type="compositionally biased region" description="Polar residues" evidence="5">
    <location>
        <begin position="988"/>
        <end position="999"/>
    </location>
</feature>
<feature type="compositionally biased region" description="Polar residues" evidence="5">
    <location>
        <begin position="1016"/>
        <end position="1026"/>
    </location>
</feature>
<feature type="compositionally biased region" description="Pro residues" evidence="5">
    <location>
        <begin position="1134"/>
        <end position="1151"/>
    </location>
</feature>
<feature type="modified residue" description="N-acetylmethionine" evidence="24">
    <location>
        <position position="1"/>
    </location>
</feature>
<feature type="modified residue" description="Phosphoserine" evidence="25">
    <location>
        <position position="57"/>
    </location>
</feature>
<feature type="modified residue" description="Phosphoserine" evidence="21 22 26">
    <location>
        <position position="113"/>
    </location>
</feature>
<feature type="modified residue" description="Phosphothreonine" evidence="22">
    <location>
        <position position="118"/>
    </location>
</feature>
<feature type="modified residue" description="Phosphoserine" evidence="25">
    <location>
        <position position="445"/>
    </location>
</feature>
<feature type="modified residue" description="Phosphoserine" evidence="22">
    <location>
        <position position="473"/>
    </location>
</feature>
<feature type="modified residue" description="Phosphoserine" evidence="25">
    <location>
        <position position="474"/>
    </location>
</feature>
<feature type="modified residue" description="Phosphoserine" evidence="23 25">
    <location>
        <position position="477"/>
    </location>
</feature>
<feature type="modified residue" description="Phosphoserine" evidence="2">
    <location>
        <position position="479"/>
    </location>
</feature>
<feature type="modified residue" description="Phosphoserine" evidence="23 26">
    <location>
        <position position="496"/>
    </location>
</feature>
<feature type="modified residue" description="Phosphoserine" evidence="23 26">
    <location>
        <position position="559"/>
    </location>
</feature>
<feature type="modified residue" description="Phosphoserine" evidence="21 23 26">
    <location>
        <position position="673"/>
    </location>
</feature>
<feature type="modified residue" description="Phosphoserine" evidence="22 25">
    <location>
        <position position="899"/>
    </location>
</feature>
<feature type="cross-link" description="Glycyl lysine isopeptide (Lys-Gly) (interchain with G-Cter in SUMO2)" evidence="27">
    <location>
        <position position="33"/>
    </location>
</feature>
<feature type="cross-link" description="Glycyl lysine isopeptide (Lys-Gly) (interchain with G-Cter in SUMO2)" evidence="27">
    <location>
        <position position="558"/>
    </location>
</feature>
<feature type="cross-link" description="Glycyl lysine isopeptide (Lys-Gly) (interchain with G-Cter in SUMO2)" evidence="27">
    <location>
        <position position="910"/>
    </location>
</feature>
<feature type="cross-link" description="Glycyl lysine isopeptide (Lys-Gly) (interchain with G-Cter in SUMO2)" evidence="27">
    <location>
        <position position="938"/>
    </location>
</feature>
<feature type="splice variant" id="VSP_055912" description="In isoform 3." evidence="19">
    <original>M</original>
    <variation>MHQDQRFRM</variation>
    <location>
        <position position="1"/>
    </location>
</feature>
<feature type="splice variant" id="VSP_024035" description="In isoform 2 and isoform 4." evidence="18">
    <location>
        <position position="520"/>
    </location>
</feature>
<feature type="splice variant" id="VSP_024038" description="In isoform 2." evidence="18">
    <original>VTVRVPQTTTYV</original>
    <variation>KRFFLYMAPRYM</variation>
    <location>
        <begin position="1095"/>
        <end position="1106"/>
    </location>
</feature>
<feature type="splice variant" id="VSP_024039" description="In isoform 2." evidence="18">
    <location>
        <begin position="1107"/>
        <end position="1270"/>
    </location>
</feature>
<feature type="sequence variant" id="VAR_031283" description="In dbSNP:rs2231908.">
    <original>E</original>
    <variation>K</variation>
    <location>
        <position position="278"/>
    </location>
</feature>
<feature type="sequence variant" id="VAR_031284" description="In dbSNP:rs2231909." evidence="8">
    <original>N</original>
    <variation>I</variation>
    <location>
        <position position="348"/>
    </location>
</feature>
<feature type="sequence variant" id="VAR_031285" description="In dbSNP:rs3213764." evidence="9 10 11">
    <original>K</original>
    <variation>R</variation>
    <location>
        <position position="530"/>
    </location>
</feature>
<feature type="mutagenesis site" description="Abolishes the interaction with SUMO." evidence="14">
    <original>D</original>
    <variation>A</variation>
    <location>
        <position position="968"/>
    </location>
</feature>
<feature type="mutagenesis site" description="Abolishes the interaction with SUMO." evidence="14">
    <original>L</original>
    <variation>A</variation>
    <location>
        <position position="969"/>
    </location>
</feature>
<feature type="mutagenesis site" description="Abolishes interaction with MBD1 and subsequent transcriptional repression." evidence="12">
    <original>L</original>
    <variation>R</variation>
    <location>
        <position position="1224"/>
    </location>
</feature>
<feature type="sequence conflict" description="In Ref. 5; AAH37312." evidence="19" ref="5">
    <original>L</original>
    <variation>V</variation>
    <location>
        <position position="457"/>
    </location>
</feature>
<feature type="sequence conflict" description="In Ref. 1; AAQ92978 and 6; BAA91751." evidence="19" ref="1 6">
    <original>S</original>
    <variation>G</variation>
    <location>
        <position position="1182"/>
    </location>
</feature>